<protein>
    <recommendedName>
        <fullName evidence="1">Small ribosomal subunit protein uS7</fullName>
    </recommendedName>
    <alternativeName>
        <fullName evidence="2">30S ribosomal protein S7</fullName>
    </alternativeName>
</protein>
<reference key="1">
    <citation type="submission" date="2005-08" db="EMBL/GenBank/DDBJ databases">
        <title>Complete sequence of chromosome 1 of Synechococcus elongatus PCC 7942.</title>
        <authorList>
            <consortium name="US DOE Joint Genome Institute"/>
            <person name="Copeland A."/>
            <person name="Lucas S."/>
            <person name="Lapidus A."/>
            <person name="Barry K."/>
            <person name="Detter J.C."/>
            <person name="Glavina T."/>
            <person name="Hammon N."/>
            <person name="Israni S."/>
            <person name="Pitluck S."/>
            <person name="Schmutz J."/>
            <person name="Larimer F."/>
            <person name="Land M."/>
            <person name="Kyrpides N."/>
            <person name="Lykidis A."/>
            <person name="Golden S."/>
            <person name="Richardson P."/>
        </authorList>
    </citation>
    <scope>NUCLEOTIDE SEQUENCE [LARGE SCALE GENOMIC DNA]</scope>
    <source>
        <strain>ATCC 33912 / PCC 7942 / FACHB-805</strain>
    </source>
</reference>
<feature type="chain" id="PRO_0000241783" description="Small ribosomal subunit protein uS7">
    <location>
        <begin position="1"/>
        <end position="156"/>
    </location>
</feature>
<evidence type="ECO:0000255" key="1">
    <source>
        <dbReference type="HAMAP-Rule" id="MF_00480"/>
    </source>
</evidence>
<evidence type="ECO:0000305" key="2"/>
<comment type="function">
    <text evidence="1">One of the primary rRNA binding proteins, it binds directly to 16S rRNA where it nucleates assembly of the head domain of the 30S subunit. Is located at the subunit interface close to the decoding center, probably blocks exit of the E-site tRNA.</text>
</comment>
<comment type="subunit">
    <text evidence="1">Part of the 30S ribosomal subunit. Contacts proteins S9 and S11.</text>
</comment>
<comment type="similarity">
    <text evidence="1">Belongs to the universal ribosomal protein uS7 family.</text>
</comment>
<gene>
    <name evidence="1" type="primary">rpsG</name>
    <name evidence="1" type="synonym">rps7</name>
    <name type="ordered locus">Synpcc7942_0886</name>
</gene>
<dbReference type="EMBL" id="CP000100">
    <property type="protein sequence ID" value="ABB56916.1"/>
    <property type="molecule type" value="Genomic_DNA"/>
</dbReference>
<dbReference type="RefSeq" id="WP_011242966.1">
    <property type="nucleotide sequence ID" value="NZ_JACJTX010000005.1"/>
</dbReference>
<dbReference type="SMR" id="Q31PV3"/>
<dbReference type="STRING" id="1140.Synpcc7942_0886"/>
<dbReference type="PaxDb" id="1140-Synpcc7942_0886"/>
<dbReference type="GeneID" id="72429735"/>
<dbReference type="KEGG" id="syf:Synpcc7942_0886"/>
<dbReference type="eggNOG" id="COG0049">
    <property type="taxonomic scope" value="Bacteria"/>
</dbReference>
<dbReference type="HOGENOM" id="CLU_072226_1_1_3"/>
<dbReference type="OrthoDB" id="9807653at2"/>
<dbReference type="BioCyc" id="SYNEL:SYNPCC7942_0886-MONOMER"/>
<dbReference type="Proteomes" id="UP000889800">
    <property type="component" value="Chromosome"/>
</dbReference>
<dbReference type="GO" id="GO:0015935">
    <property type="term" value="C:small ribosomal subunit"/>
    <property type="evidence" value="ECO:0007669"/>
    <property type="project" value="InterPro"/>
</dbReference>
<dbReference type="GO" id="GO:0019843">
    <property type="term" value="F:rRNA binding"/>
    <property type="evidence" value="ECO:0007669"/>
    <property type="project" value="UniProtKB-UniRule"/>
</dbReference>
<dbReference type="GO" id="GO:0003735">
    <property type="term" value="F:structural constituent of ribosome"/>
    <property type="evidence" value="ECO:0007669"/>
    <property type="project" value="InterPro"/>
</dbReference>
<dbReference type="GO" id="GO:0000049">
    <property type="term" value="F:tRNA binding"/>
    <property type="evidence" value="ECO:0007669"/>
    <property type="project" value="UniProtKB-UniRule"/>
</dbReference>
<dbReference type="GO" id="GO:0006412">
    <property type="term" value="P:translation"/>
    <property type="evidence" value="ECO:0007669"/>
    <property type="project" value="UniProtKB-UniRule"/>
</dbReference>
<dbReference type="CDD" id="cd14871">
    <property type="entry name" value="uS7_Chloroplast"/>
    <property type="match status" value="1"/>
</dbReference>
<dbReference type="FunFam" id="1.10.455.10:FF:000001">
    <property type="entry name" value="30S ribosomal protein S7"/>
    <property type="match status" value="1"/>
</dbReference>
<dbReference type="Gene3D" id="1.10.455.10">
    <property type="entry name" value="Ribosomal protein S7 domain"/>
    <property type="match status" value="1"/>
</dbReference>
<dbReference type="HAMAP" id="MF_00480_B">
    <property type="entry name" value="Ribosomal_uS7_B"/>
    <property type="match status" value="1"/>
</dbReference>
<dbReference type="InterPro" id="IPR000235">
    <property type="entry name" value="Ribosomal_uS7"/>
</dbReference>
<dbReference type="InterPro" id="IPR005717">
    <property type="entry name" value="Ribosomal_uS7_bac/org-type"/>
</dbReference>
<dbReference type="InterPro" id="IPR020606">
    <property type="entry name" value="Ribosomal_uS7_CS"/>
</dbReference>
<dbReference type="InterPro" id="IPR023798">
    <property type="entry name" value="Ribosomal_uS7_dom"/>
</dbReference>
<dbReference type="InterPro" id="IPR036823">
    <property type="entry name" value="Ribosomal_uS7_dom_sf"/>
</dbReference>
<dbReference type="NCBIfam" id="TIGR01029">
    <property type="entry name" value="rpsG_bact"/>
    <property type="match status" value="1"/>
</dbReference>
<dbReference type="PANTHER" id="PTHR11205">
    <property type="entry name" value="RIBOSOMAL PROTEIN S7"/>
    <property type="match status" value="1"/>
</dbReference>
<dbReference type="Pfam" id="PF00177">
    <property type="entry name" value="Ribosomal_S7"/>
    <property type="match status" value="1"/>
</dbReference>
<dbReference type="PIRSF" id="PIRSF002122">
    <property type="entry name" value="RPS7p_RPS7a_RPS5e_RPS7o"/>
    <property type="match status" value="1"/>
</dbReference>
<dbReference type="SUPFAM" id="SSF47973">
    <property type="entry name" value="Ribosomal protein S7"/>
    <property type="match status" value="1"/>
</dbReference>
<dbReference type="PROSITE" id="PS00052">
    <property type="entry name" value="RIBOSOMAL_S7"/>
    <property type="match status" value="1"/>
</dbReference>
<proteinExistence type="inferred from homology"/>
<organism>
    <name type="scientific">Synechococcus elongatus (strain ATCC 33912 / PCC 7942 / FACHB-805)</name>
    <name type="common">Anacystis nidulans R2</name>
    <dbReference type="NCBI Taxonomy" id="1140"/>
    <lineage>
        <taxon>Bacteria</taxon>
        <taxon>Bacillati</taxon>
        <taxon>Cyanobacteriota</taxon>
        <taxon>Cyanophyceae</taxon>
        <taxon>Synechococcales</taxon>
        <taxon>Synechococcaceae</taxon>
        <taxon>Synechococcus</taxon>
    </lineage>
</organism>
<keyword id="KW-1185">Reference proteome</keyword>
<keyword id="KW-0687">Ribonucleoprotein</keyword>
<keyword id="KW-0689">Ribosomal protein</keyword>
<keyword id="KW-0694">RNA-binding</keyword>
<keyword id="KW-0699">rRNA-binding</keyword>
<keyword id="KW-0820">tRNA-binding</keyword>
<sequence>MSRRTSAQKRSVNPDPKFNSRLASMMVARLMDSGKKSLAFRILYSAFDLIQERTGNDPLELFEQAVRNATPLVEVRARRVGGATYQVPMEVRSERGTAMALRWLVQYSRQRPGKSMAIKLANELMDAANETGSSVRKREETHKMAEANKAFAHYRY</sequence>
<accession>Q31PV3</accession>
<name>RS7_SYNE7</name>